<reference key="1">
    <citation type="journal article" date="2008" name="Chem. Biol. Interact.">
        <title>Extending the Bacillus cereus group genomics to putative food-borne pathogens of different toxicity.</title>
        <authorList>
            <person name="Lapidus A."/>
            <person name="Goltsman E."/>
            <person name="Auger S."/>
            <person name="Galleron N."/>
            <person name="Segurens B."/>
            <person name="Dossat C."/>
            <person name="Land M.L."/>
            <person name="Broussolle V."/>
            <person name="Brillard J."/>
            <person name="Guinebretiere M.-H."/>
            <person name="Sanchis V."/>
            <person name="Nguen-the C."/>
            <person name="Lereclus D."/>
            <person name="Richardson P."/>
            <person name="Wincker P."/>
            <person name="Weissenbach J."/>
            <person name="Ehrlich S.D."/>
            <person name="Sorokin A."/>
        </authorList>
    </citation>
    <scope>NUCLEOTIDE SEQUENCE [LARGE SCALE GENOMIC DNA]</scope>
    <source>
        <strain>DSM 22905 / CIP 110041 / 391-98 / NVH 391-98</strain>
    </source>
</reference>
<accession>A7GTC4</accession>
<evidence type="ECO:0000255" key="1">
    <source>
        <dbReference type="HAMAP-Rule" id="MF_01363"/>
    </source>
</evidence>
<evidence type="ECO:0000305" key="2"/>
<protein>
    <recommendedName>
        <fullName evidence="1">Large ribosomal subunit protein bL21</fullName>
    </recommendedName>
    <alternativeName>
        <fullName evidence="2">50S ribosomal protein L21</fullName>
    </alternativeName>
</protein>
<name>RL21_BACCN</name>
<keyword id="KW-0687">Ribonucleoprotein</keyword>
<keyword id="KW-0689">Ribosomal protein</keyword>
<keyword id="KW-0694">RNA-binding</keyword>
<keyword id="KW-0699">rRNA-binding</keyword>
<gene>
    <name evidence="1" type="primary">rplU</name>
    <name type="ordered locus">Bcer98_3159</name>
</gene>
<proteinExistence type="inferred from homology"/>
<feature type="chain" id="PRO_1000086968" description="Large ribosomal subunit protein bL21">
    <location>
        <begin position="1"/>
        <end position="102"/>
    </location>
</feature>
<dbReference type="EMBL" id="CP000764">
    <property type="protein sequence ID" value="ABS23382.1"/>
    <property type="molecule type" value="Genomic_DNA"/>
</dbReference>
<dbReference type="RefSeq" id="WP_000270908.1">
    <property type="nucleotide sequence ID" value="NC_009674.1"/>
</dbReference>
<dbReference type="SMR" id="A7GTC4"/>
<dbReference type="STRING" id="315749.Bcer98_3159"/>
<dbReference type="GeneID" id="75087580"/>
<dbReference type="KEGG" id="bcy:Bcer98_3159"/>
<dbReference type="eggNOG" id="COG0261">
    <property type="taxonomic scope" value="Bacteria"/>
</dbReference>
<dbReference type="HOGENOM" id="CLU_061463_3_2_9"/>
<dbReference type="OrthoDB" id="9813334at2"/>
<dbReference type="Proteomes" id="UP000002300">
    <property type="component" value="Chromosome"/>
</dbReference>
<dbReference type="GO" id="GO:0005737">
    <property type="term" value="C:cytoplasm"/>
    <property type="evidence" value="ECO:0007669"/>
    <property type="project" value="UniProtKB-ARBA"/>
</dbReference>
<dbReference type="GO" id="GO:1990904">
    <property type="term" value="C:ribonucleoprotein complex"/>
    <property type="evidence" value="ECO:0007669"/>
    <property type="project" value="UniProtKB-KW"/>
</dbReference>
<dbReference type="GO" id="GO:0005840">
    <property type="term" value="C:ribosome"/>
    <property type="evidence" value="ECO:0007669"/>
    <property type="project" value="UniProtKB-KW"/>
</dbReference>
<dbReference type="GO" id="GO:0019843">
    <property type="term" value="F:rRNA binding"/>
    <property type="evidence" value="ECO:0007669"/>
    <property type="project" value="UniProtKB-UniRule"/>
</dbReference>
<dbReference type="GO" id="GO:0003735">
    <property type="term" value="F:structural constituent of ribosome"/>
    <property type="evidence" value="ECO:0007669"/>
    <property type="project" value="InterPro"/>
</dbReference>
<dbReference type="GO" id="GO:0006412">
    <property type="term" value="P:translation"/>
    <property type="evidence" value="ECO:0007669"/>
    <property type="project" value="UniProtKB-UniRule"/>
</dbReference>
<dbReference type="HAMAP" id="MF_01363">
    <property type="entry name" value="Ribosomal_bL21"/>
    <property type="match status" value="1"/>
</dbReference>
<dbReference type="InterPro" id="IPR028909">
    <property type="entry name" value="bL21-like"/>
</dbReference>
<dbReference type="InterPro" id="IPR036164">
    <property type="entry name" value="bL21-like_sf"/>
</dbReference>
<dbReference type="InterPro" id="IPR001787">
    <property type="entry name" value="Ribosomal_bL21"/>
</dbReference>
<dbReference type="InterPro" id="IPR018258">
    <property type="entry name" value="Ribosomal_bL21_CS"/>
</dbReference>
<dbReference type="NCBIfam" id="TIGR00061">
    <property type="entry name" value="L21"/>
    <property type="match status" value="1"/>
</dbReference>
<dbReference type="PANTHER" id="PTHR21349">
    <property type="entry name" value="50S RIBOSOMAL PROTEIN L21"/>
    <property type="match status" value="1"/>
</dbReference>
<dbReference type="PANTHER" id="PTHR21349:SF0">
    <property type="entry name" value="LARGE RIBOSOMAL SUBUNIT PROTEIN BL21M"/>
    <property type="match status" value="1"/>
</dbReference>
<dbReference type="Pfam" id="PF00829">
    <property type="entry name" value="Ribosomal_L21p"/>
    <property type="match status" value="1"/>
</dbReference>
<dbReference type="SUPFAM" id="SSF141091">
    <property type="entry name" value="L21p-like"/>
    <property type="match status" value="1"/>
</dbReference>
<dbReference type="PROSITE" id="PS01169">
    <property type="entry name" value="RIBOSOMAL_L21"/>
    <property type="match status" value="1"/>
</dbReference>
<organism>
    <name type="scientific">Bacillus cytotoxicus (strain DSM 22905 / CIP 110041 / 391-98 / NVH 391-98)</name>
    <dbReference type="NCBI Taxonomy" id="315749"/>
    <lineage>
        <taxon>Bacteria</taxon>
        <taxon>Bacillati</taxon>
        <taxon>Bacillota</taxon>
        <taxon>Bacilli</taxon>
        <taxon>Bacillales</taxon>
        <taxon>Bacillaceae</taxon>
        <taxon>Bacillus</taxon>
        <taxon>Bacillus cereus group</taxon>
    </lineage>
</organism>
<sequence>MYAIIETGGKQIKVEAGQEIYIEKLDVEAGETVTFDKVLFVGGENVKVGSPVVEGATVTAKVEKHGRAKKIIVFKYKAKKNNRKKQGHRQPYTKLVVEAINA</sequence>
<comment type="function">
    <text evidence="1">This protein binds to 23S rRNA in the presence of protein L20.</text>
</comment>
<comment type="subunit">
    <text evidence="1">Part of the 50S ribosomal subunit. Contacts protein L20.</text>
</comment>
<comment type="similarity">
    <text evidence="1">Belongs to the bacterial ribosomal protein bL21 family.</text>
</comment>